<gene>
    <name type="primary">CYCP1-1</name>
    <name type="ordered locus">Os04g0628900</name>
    <name type="ordered locus">Os04g0628700</name>
    <name type="ordered locus">LOC_Os04g53680</name>
    <name type="ORF">OSJNBa0089N06.10</name>
</gene>
<feature type="chain" id="PRO_0000287064" description="Cyclin-P1-1">
    <location>
        <begin position="1"/>
        <end position="264"/>
    </location>
</feature>
<feature type="region of interest" description="Disordered" evidence="1">
    <location>
        <begin position="1"/>
        <end position="25"/>
    </location>
</feature>
<proteinExistence type="inferred from homology"/>
<sequence length="264" mass="27780">MDAAAAAGGEMSRQKATASAPPPPELDMVARAVQRLVARNDAVEALSGGGEAAAGLGAGMAAFEAARGAPAPRIGVAQYLERVHRYAGLEPECYVVAYAYVDMAAHRRPAAAVASRNVHRLLLACLLVASKVLDDFHHNNAFFARVGGVSNAEMNRLELELLAVLDFEVMLSHRVYELYREHLEKEARRDGGGGDMLAGASAAAAAKAGRMAAVSPSKLLERAAVNGAAQHDDWRSLGTAAAAEAANGVRRHRSSSSSRYSFDC</sequence>
<reference key="1">
    <citation type="journal article" date="2002" name="Nature">
        <title>Sequence and analysis of rice chromosome 4.</title>
        <authorList>
            <person name="Feng Q."/>
            <person name="Zhang Y."/>
            <person name="Hao P."/>
            <person name="Wang S."/>
            <person name="Fu G."/>
            <person name="Huang Y."/>
            <person name="Li Y."/>
            <person name="Zhu J."/>
            <person name="Liu Y."/>
            <person name="Hu X."/>
            <person name="Jia P."/>
            <person name="Zhang Y."/>
            <person name="Zhao Q."/>
            <person name="Ying K."/>
            <person name="Yu S."/>
            <person name="Tang Y."/>
            <person name="Weng Q."/>
            <person name="Zhang L."/>
            <person name="Lu Y."/>
            <person name="Mu J."/>
            <person name="Lu Y."/>
            <person name="Zhang L.S."/>
            <person name="Yu Z."/>
            <person name="Fan D."/>
            <person name="Liu X."/>
            <person name="Lu T."/>
            <person name="Li C."/>
            <person name="Wu Y."/>
            <person name="Sun T."/>
            <person name="Lei H."/>
            <person name="Li T."/>
            <person name="Hu H."/>
            <person name="Guan J."/>
            <person name="Wu M."/>
            <person name="Zhang R."/>
            <person name="Zhou B."/>
            <person name="Chen Z."/>
            <person name="Chen L."/>
            <person name="Jin Z."/>
            <person name="Wang R."/>
            <person name="Yin H."/>
            <person name="Cai Z."/>
            <person name="Ren S."/>
            <person name="Lv G."/>
            <person name="Gu W."/>
            <person name="Zhu G."/>
            <person name="Tu Y."/>
            <person name="Jia J."/>
            <person name="Zhang Y."/>
            <person name="Chen J."/>
            <person name="Kang H."/>
            <person name="Chen X."/>
            <person name="Shao C."/>
            <person name="Sun Y."/>
            <person name="Hu Q."/>
            <person name="Zhang X."/>
            <person name="Zhang W."/>
            <person name="Wang L."/>
            <person name="Ding C."/>
            <person name="Sheng H."/>
            <person name="Gu J."/>
            <person name="Chen S."/>
            <person name="Ni L."/>
            <person name="Zhu F."/>
            <person name="Chen W."/>
            <person name="Lan L."/>
            <person name="Lai Y."/>
            <person name="Cheng Z."/>
            <person name="Gu M."/>
            <person name="Jiang J."/>
            <person name="Li J."/>
            <person name="Hong G."/>
            <person name="Xue Y."/>
            <person name="Han B."/>
        </authorList>
    </citation>
    <scope>NUCLEOTIDE SEQUENCE [LARGE SCALE GENOMIC DNA]</scope>
    <source>
        <strain>cv. Nipponbare</strain>
    </source>
</reference>
<reference key="2">
    <citation type="journal article" date="2005" name="Nature">
        <title>The map-based sequence of the rice genome.</title>
        <authorList>
            <consortium name="International rice genome sequencing project (IRGSP)"/>
        </authorList>
    </citation>
    <scope>NUCLEOTIDE SEQUENCE [LARGE SCALE GENOMIC DNA]</scope>
    <source>
        <strain>cv. Nipponbare</strain>
    </source>
</reference>
<reference key="3">
    <citation type="journal article" date="2008" name="Nucleic Acids Res.">
        <title>The rice annotation project database (RAP-DB): 2008 update.</title>
        <authorList>
            <consortium name="The rice annotation project (RAP)"/>
        </authorList>
    </citation>
    <scope>GENOME REANNOTATION</scope>
    <source>
        <strain>cv. Nipponbare</strain>
    </source>
</reference>
<reference key="4">
    <citation type="journal article" date="2013" name="Rice">
        <title>Improvement of the Oryza sativa Nipponbare reference genome using next generation sequence and optical map data.</title>
        <authorList>
            <person name="Kawahara Y."/>
            <person name="de la Bastide M."/>
            <person name="Hamilton J.P."/>
            <person name="Kanamori H."/>
            <person name="McCombie W.R."/>
            <person name="Ouyang S."/>
            <person name="Schwartz D.C."/>
            <person name="Tanaka T."/>
            <person name="Wu J."/>
            <person name="Zhou S."/>
            <person name="Childs K.L."/>
            <person name="Davidson R.M."/>
            <person name="Lin H."/>
            <person name="Quesada-Ocampo L."/>
            <person name="Vaillancourt B."/>
            <person name="Sakai H."/>
            <person name="Lee S.S."/>
            <person name="Kim J."/>
            <person name="Numa H."/>
            <person name="Itoh T."/>
            <person name="Buell C.R."/>
            <person name="Matsumoto T."/>
        </authorList>
    </citation>
    <scope>GENOME REANNOTATION</scope>
    <source>
        <strain>cv. Nipponbare</strain>
    </source>
</reference>
<reference key="5">
    <citation type="journal article" date="2006" name="Mol. Genet. Genomics">
        <title>Genome-wide analysis of cyclin family in rice (Oryza sativa L.).</title>
        <authorList>
            <person name="La H."/>
            <person name="Li J."/>
            <person name="Ji Z."/>
            <person name="Cheng Y."/>
            <person name="Li X."/>
            <person name="Jiang S."/>
            <person name="Venkatesh P.N."/>
            <person name="Ramachandran S."/>
        </authorList>
    </citation>
    <scope>GENE FAMILY</scope>
    <scope>NOMENCLATURE</scope>
</reference>
<comment type="similarity">
    <text evidence="2">Belongs to the cyclin family. Cyclin U/P subfamily.</text>
</comment>
<comment type="sequence caution" evidence="2">
    <conflict type="erroneous gene model prediction">
        <sequence resource="EMBL-CDS" id="BAF15876"/>
    </conflict>
</comment>
<comment type="sequence caution" evidence="2">
    <conflict type="erroneous gene model prediction">
        <sequence resource="EMBL-CDS" id="BAH92831"/>
    </conflict>
</comment>
<evidence type="ECO:0000256" key="1">
    <source>
        <dbReference type="SAM" id="MobiDB-lite"/>
    </source>
</evidence>
<evidence type="ECO:0000305" key="2"/>
<keyword id="KW-0131">Cell cycle</keyword>
<keyword id="KW-0132">Cell division</keyword>
<keyword id="KW-0195">Cyclin</keyword>
<keyword id="KW-1185">Reference proteome</keyword>
<name>CCP11_ORYSJ</name>
<protein>
    <recommendedName>
        <fullName>Cyclin-P1-1</fullName>
        <shortName>CycP1;1</shortName>
    </recommendedName>
</protein>
<accession>Q0J9W0</accession>
<accession>A0A0P0WF48</accession>
<accession>C7J1Z4</accession>
<accession>Q0J9W1</accession>
<accession>Q7XN72</accession>
<organism>
    <name type="scientific">Oryza sativa subsp. japonica</name>
    <name type="common">Rice</name>
    <dbReference type="NCBI Taxonomy" id="39947"/>
    <lineage>
        <taxon>Eukaryota</taxon>
        <taxon>Viridiplantae</taxon>
        <taxon>Streptophyta</taxon>
        <taxon>Embryophyta</taxon>
        <taxon>Tracheophyta</taxon>
        <taxon>Spermatophyta</taxon>
        <taxon>Magnoliopsida</taxon>
        <taxon>Liliopsida</taxon>
        <taxon>Poales</taxon>
        <taxon>Poaceae</taxon>
        <taxon>BOP clade</taxon>
        <taxon>Oryzoideae</taxon>
        <taxon>Oryzeae</taxon>
        <taxon>Oryzinae</taxon>
        <taxon>Oryza</taxon>
        <taxon>Oryza sativa</taxon>
    </lineage>
</organism>
<dbReference type="EMBL" id="AL662988">
    <property type="protein sequence ID" value="CAE04249.3"/>
    <property type="molecule type" value="Genomic_DNA"/>
</dbReference>
<dbReference type="EMBL" id="AP008210">
    <property type="protein sequence ID" value="BAF15876.2"/>
    <property type="status" value="ALT_SEQ"/>
    <property type="molecule type" value="Genomic_DNA"/>
</dbReference>
<dbReference type="EMBL" id="AP008210">
    <property type="protein sequence ID" value="BAH92831.1"/>
    <property type="status" value="ALT_SEQ"/>
    <property type="molecule type" value="Genomic_DNA"/>
</dbReference>
<dbReference type="EMBL" id="AP014960">
    <property type="protein sequence ID" value="BAS91144.1"/>
    <property type="molecule type" value="Genomic_DNA"/>
</dbReference>
<dbReference type="SMR" id="Q0J9W0"/>
<dbReference type="FunCoup" id="Q0J9W0">
    <property type="interactions" value="2"/>
</dbReference>
<dbReference type="STRING" id="39947.Q0J9W0"/>
<dbReference type="PaxDb" id="39947-Q0J9W0"/>
<dbReference type="EnsemblPlants" id="Os04t0628900-00">
    <property type="protein sequence ID" value="Os04t0628900-00"/>
    <property type="gene ID" value="Os04g0628900"/>
</dbReference>
<dbReference type="Gramene" id="Os04t0628900-00">
    <property type="protein sequence ID" value="Os04t0628900-00"/>
    <property type="gene ID" value="Os04g0628900"/>
</dbReference>
<dbReference type="KEGG" id="dosa:Os04g0628700"/>
<dbReference type="KEGG" id="dosa:Os04g0628800"/>
<dbReference type="eggNOG" id="KOG1674">
    <property type="taxonomic scope" value="Eukaryota"/>
</dbReference>
<dbReference type="HOGENOM" id="CLU_084668_0_0_1"/>
<dbReference type="InParanoid" id="Q0J9W0"/>
<dbReference type="OMA" id="GLEPECY"/>
<dbReference type="Proteomes" id="UP000000763">
    <property type="component" value="Chromosome 4"/>
</dbReference>
<dbReference type="Proteomes" id="UP000059680">
    <property type="component" value="Chromosome 4"/>
</dbReference>
<dbReference type="GO" id="GO:0019901">
    <property type="term" value="F:protein kinase binding"/>
    <property type="evidence" value="ECO:0007669"/>
    <property type="project" value="InterPro"/>
</dbReference>
<dbReference type="GO" id="GO:0051301">
    <property type="term" value="P:cell division"/>
    <property type="evidence" value="ECO:0007669"/>
    <property type="project" value="UniProtKB-KW"/>
</dbReference>
<dbReference type="Gene3D" id="1.10.472.10">
    <property type="entry name" value="Cyclin-like"/>
    <property type="match status" value="1"/>
</dbReference>
<dbReference type="InterPro" id="IPR036915">
    <property type="entry name" value="Cyclin-like_sf"/>
</dbReference>
<dbReference type="InterPro" id="IPR013922">
    <property type="entry name" value="Cyclin_PHO80-like"/>
</dbReference>
<dbReference type="PANTHER" id="PTHR15615">
    <property type="match status" value="1"/>
</dbReference>
<dbReference type="PANTHER" id="PTHR15615:SF121">
    <property type="entry name" value="CYCLIN-U1-1"/>
    <property type="match status" value="1"/>
</dbReference>
<dbReference type="Pfam" id="PF08613">
    <property type="entry name" value="Cyclin"/>
    <property type="match status" value="1"/>
</dbReference>
<dbReference type="SUPFAM" id="SSF47954">
    <property type="entry name" value="Cyclin-like"/>
    <property type="match status" value="1"/>
</dbReference>